<comment type="function">
    <text evidence="2 3 4">Type III polyketide synthase involved in the biosynthesis of the phytoalexins bisphenyls and dibenzofurans. Can also use salicoyl-CoA and malonyl-CoA to produce a diketide intermediate yielding 4-hydroxycoumarin after cyclization and enolization. Can also use m-hydroxybenzoyl-CoA as substrate, producing m-hydroxybenzoyl diacetic acid lactone as a derailment product. No activity with p-hydroxybenzoyl-CoA, CoA-linked cinnamic acids or acetyl-CoA.</text>
</comment>
<comment type="catalytic activity">
    <reaction evidence="2 3">
        <text>benzoyl-CoA + 3 malonyl-CoA + 3 H(+) = biphenyl-3,5-diol + 4 CO2 + 4 CoA</text>
        <dbReference type="Rhea" id="RHEA:22292"/>
        <dbReference type="ChEBI" id="CHEBI:15378"/>
        <dbReference type="ChEBI" id="CHEBI:16526"/>
        <dbReference type="ChEBI" id="CHEBI:52069"/>
        <dbReference type="ChEBI" id="CHEBI:57287"/>
        <dbReference type="ChEBI" id="CHEBI:57369"/>
        <dbReference type="ChEBI" id="CHEBI:57384"/>
        <dbReference type="EC" id="2.3.1.177"/>
    </reaction>
</comment>
<comment type="biophysicochemical properties">
    <kinetics>
        <KM evidence="3 4">0.7 uM for benzoyl-CoA</KM>
        <KM evidence="3 4">6.2 uM for malonyl-CoA</KM>
        <KM evidence="3 4">0.8 uM for salicoyl-CoA</KM>
        <text>kcat is 0.43 min(-1) with benzoyl-CoA as substrate. kcat is 0.27 min(-1) with salicoyl-CoA as substrate.</text>
    </kinetics>
    <phDependence>
        <text evidence="3 4">Optimum pH is 6.5-7.0.</text>
    </phDependence>
    <temperatureDependence>
        <text evidence="3 4">Optimum temperature is 35 degrees Celsius.</text>
    </temperatureDependence>
</comment>
<comment type="subunit">
    <text evidence="3">Homodimer.</text>
</comment>
<comment type="induction">
    <text evidence="3 5">Up-regulated by elicitor and by endogenous H(2)O(2).</text>
</comment>
<comment type="similarity">
    <text evidence="6">Belongs to the thiolase-like superfamily. Chalcone/stilbene synthases family.</text>
</comment>
<organism>
    <name type="scientific">Sorbus aucuparia</name>
    <name type="common">European mountain ash</name>
    <name type="synonym">Rowan</name>
    <dbReference type="NCBI Taxonomy" id="36599"/>
    <lineage>
        <taxon>Eukaryota</taxon>
        <taxon>Viridiplantae</taxon>
        <taxon>Streptophyta</taxon>
        <taxon>Embryophyta</taxon>
        <taxon>Tracheophyta</taxon>
        <taxon>Spermatophyta</taxon>
        <taxon>Magnoliopsida</taxon>
        <taxon>eudicotyledons</taxon>
        <taxon>Gunneridae</taxon>
        <taxon>Pentapetalae</taxon>
        <taxon>rosids</taxon>
        <taxon>fabids</taxon>
        <taxon>Rosales</taxon>
        <taxon>Rosaceae</taxon>
        <taxon>Amygdaloideae</taxon>
        <taxon>Maleae</taxon>
        <taxon>Sorbus</taxon>
    </lineage>
</organism>
<evidence type="ECO:0000250" key="1"/>
<evidence type="ECO:0000269" key="2">
    <source>
    </source>
</evidence>
<evidence type="ECO:0000269" key="3">
    <source>
    </source>
</evidence>
<evidence type="ECO:0000269" key="4">
    <source>
    </source>
</evidence>
<evidence type="ECO:0000269" key="5">
    <source>
    </source>
</evidence>
<evidence type="ECO:0000305" key="6"/>
<dbReference type="EC" id="2.3.1.177"/>
<dbReference type="EMBL" id="DQ286036">
    <property type="protein sequence ID" value="ABB89212.1"/>
    <property type="molecule type" value="mRNA"/>
</dbReference>
<dbReference type="SMR" id="Q27Z07"/>
<dbReference type="KEGG" id="ag:ABB89212"/>
<dbReference type="BioCyc" id="MetaCyc:MONOMER-17615"/>
<dbReference type="BRENDA" id="2.3.1.177">
    <property type="organism ID" value="5766"/>
</dbReference>
<dbReference type="SABIO-RK" id="Q27Z07"/>
<dbReference type="GO" id="GO:0033815">
    <property type="term" value="F:biphenyl synthase activity"/>
    <property type="evidence" value="ECO:0000314"/>
    <property type="project" value="UniProtKB"/>
</dbReference>
<dbReference type="GO" id="GO:0042802">
    <property type="term" value="F:identical protein binding"/>
    <property type="evidence" value="ECO:0000314"/>
    <property type="project" value="UniProtKB"/>
</dbReference>
<dbReference type="GO" id="GO:0052315">
    <property type="term" value="P:phytoalexin biosynthetic process"/>
    <property type="evidence" value="ECO:0000314"/>
    <property type="project" value="UniProtKB"/>
</dbReference>
<dbReference type="GO" id="GO:0030639">
    <property type="term" value="P:polyketide biosynthetic process"/>
    <property type="evidence" value="ECO:0007669"/>
    <property type="project" value="TreeGrafter"/>
</dbReference>
<dbReference type="CDD" id="cd00831">
    <property type="entry name" value="CHS_like"/>
    <property type="match status" value="1"/>
</dbReference>
<dbReference type="FunFam" id="3.40.47.10:FF:000014">
    <property type="entry name" value="Chalcone synthase 1"/>
    <property type="match status" value="1"/>
</dbReference>
<dbReference type="FunFam" id="3.40.47.10:FF:000025">
    <property type="entry name" value="Chalcone synthase 2"/>
    <property type="match status" value="1"/>
</dbReference>
<dbReference type="Gene3D" id="3.40.47.10">
    <property type="match status" value="2"/>
</dbReference>
<dbReference type="InterPro" id="IPR012328">
    <property type="entry name" value="Chalcone/stilbene_synt_C"/>
</dbReference>
<dbReference type="InterPro" id="IPR001099">
    <property type="entry name" value="Chalcone/stilbene_synt_N"/>
</dbReference>
<dbReference type="InterPro" id="IPR011141">
    <property type="entry name" value="Polyketide_synthase_type-III"/>
</dbReference>
<dbReference type="InterPro" id="IPR016039">
    <property type="entry name" value="Thiolase-like"/>
</dbReference>
<dbReference type="PANTHER" id="PTHR11877:SF14">
    <property type="entry name" value="CHALCONE SYNTHASE"/>
    <property type="match status" value="1"/>
</dbReference>
<dbReference type="PANTHER" id="PTHR11877">
    <property type="entry name" value="HYDROXYMETHYLGLUTARYL-COA SYNTHASE"/>
    <property type="match status" value="1"/>
</dbReference>
<dbReference type="Pfam" id="PF02797">
    <property type="entry name" value="Chal_sti_synt_C"/>
    <property type="match status" value="1"/>
</dbReference>
<dbReference type="Pfam" id="PF00195">
    <property type="entry name" value="Chal_sti_synt_N"/>
    <property type="match status" value="1"/>
</dbReference>
<dbReference type="PIRSF" id="PIRSF000451">
    <property type="entry name" value="PKS_III"/>
    <property type="match status" value="1"/>
</dbReference>
<dbReference type="SUPFAM" id="SSF53901">
    <property type="entry name" value="Thiolase-like"/>
    <property type="match status" value="2"/>
</dbReference>
<accession>Q27Z07</accession>
<reference key="1">
    <citation type="journal article" date="2007" name="Planta">
        <title>Biphenyl synthase, a novel type III polyketide synthase.</title>
        <authorList>
            <person name="Liu B."/>
            <person name="Raeth T."/>
            <person name="Beuerle T."/>
            <person name="Beerhues L."/>
        </authorList>
    </citation>
    <scope>NUCLEOTIDE SEQUENCE [MRNA]</scope>
    <scope>FUNCTION</scope>
    <scope>CATALYTIC ACTIVITY</scope>
    <scope>BIOPHYSICOCHEMICAL PROPERTIES</scope>
    <scope>SUBUNIT</scope>
    <scope>INDUCTION BY ELICITOR</scope>
</reference>
<reference key="2">
    <citation type="journal article" date="2004" name="Planta">
        <title>Biphenyl synthase from yeast-extract-treated cell cultures of Sorbus aucuparia.</title>
        <authorList>
            <person name="Liu B."/>
            <person name="Beuerle T."/>
            <person name="Klundt T."/>
            <person name="Beerhues L."/>
        </authorList>
    </citation>
    <scope>FUNCTION</scope>
    <scope>CATALYTIC ACTIVITY</scope>
    <scope>SUBSTRATE SPECIFICITY</scope>
</reference>
<reference key="3">
    <citation type="journal article" date="2010" name="Plant Mol. Biol.">
        <title>A novel 4-hydroxycoumarin biosynthetic pathway.</title>
        <authorList>
            <person name="Liu B."/>
            <person name="Raeth T."/>
            <person name="Beuerle T."/>
            <person name="Beerhues L."/>
        </authorList>
    </citation>
    <scope>FUNCTION</scope>
    <scope>BIOPHYSICOCHEMICAL PROPERTIES</scope>
</reference>
<reference key="4">
    <citation type="journal article" date="2012" name="Planta">
        <title>Endogenous hydrogen peroxide is a key factor in the yeast extract-induced activation of biphenyl biosynthesis in cell cultures of Sorbus aucuparia.</title>
        <authorList>
            <person name="Qiu X."/>
            <person name="Lei C."/>
            <person name="Huang L."/>
            <person name="Li X."/>
            <person name="Hao H."/>
            <person name="Du Z."/>
            <person name="Wang H."/>
            <person name="Ye H."/>
            <person name="Beerhues L."/>
            <person name="Liu B."/>
        </authorList>
    </citation>
    <scope>INDUCTION BY HYDROGEN PEROXIDE</scope>
</reference>
<sequence length="390" mass="43014">MAPLVKNHGEPQHAKILAIGTANPPNVYYQKDYPDFLFRVTKNEHRTDLREKFDRICEKSRTRKRYLHLTEEILKANPSIYTYGAPSLDVRQDMLNSEVPKLGQQAALKAIKEWGQPISKITHLIFCTASCVDMPGADFQLVKLLGLNPSVTRTMIYEAGCYAGATVLRLAKDFAENNEGARVLVVCAEITTVFFHGLTDTHLDILVGQALFADGASAVIVGANPEPKIERPLFEIVACRQTIIPNSEHGVVANIREMGFTYYLSGEVPKFVGGNVVDFLTKTFEKVDGKNKDWNSLFFSVHPGGPAIVDQVEEQLGLKEGKLRATRHVLSEYGNMGAPSVHFILDDMRKKSIEEGKSTTGEGLEWGVVIGIGPGLTVETAVLRSESIPC</sequence>
<gene>
    <name type="primary">BIS1</name>
</gene>
<keyword id="KW-0012">Acyltransferase</keyword>
<keyword id="KW-0808">Transferase</keyword>
<proteinExistence type="evidence at protein level"/>
<feature type="chain" id="PRO_0000418419" description="3,5-dihydroxybiphenyl synthase">
    <location>
        <begin position="1"/>
        <end position="390"/>
    </location>
</feature>
<feature type="active site" evidence="1">
    <location>
        <position position="161"/>
    </location>
</feature>
<protein>
    <recommendedName>
        <fullName>3,5-dihydroxybiphenyl synthase</fullName>
        <ecNumber>2.3.1.177</ecNumber>
    </recommendedName>
    <alternativeName>
        <fullName>Biphenyl synthase 1</fullName>
        <shortName>SaBIS1</shortName>
    </alternativeName>
</protein>
<name>BIPS1_SORAU</name>